<accession>A4FYM5</accession>
<reference key="1">
    <citation type="submission" date="2007-03" db="EMBL/GenBank/DDBJ databases">
        <title>Complete sequence of chromosome of Methanococcus maripaludis C5.</title>
        <authorList>
            <consortium name="US DOE Joint Genome Institute"/>
            <person name="Copeland A."/>
            <person name="Lucas S."/>
            <person name="Lapidus A."/>
            <person name="Barry K."/>
            <person name="Glavina del Rio T."/>
            <person name="Dalin E."/>
            <person name="Tice H."/>
            <person name="Pitluck S."/>
            <person name="Chertkov O."/>
            <person name="Brettin T."/>
            <person name="Bruce D."/>
            <person name="Han C."/>
            <person name="Detter J.C."/>
            <person name="Schmutz J."/>
            <person name="Larimer F."/>
            <person name="Land M."/>
            <person name="Hauser L."/>
            <person name="Kyrpides N."/>
            <person name="Mikhailova N."/>
            <person name="Sieprawska-Lupa M."/>
            <person name="Whitman W.B."/>
            <person name="Richardson P."/>
        </authorList>
    </citation>
    <scope>NUCLEOTIDE SEQUENCE [LARGE SCALE GENOMIC DNA]</scope>
    <source>
        <strain>C5 / ATCC BAA-1333</strain>
    </source>
</reference>
<keyword id="KW-0396">Initiation factor</keyword>
<keyword id="KW-0648">Protein biosynthesis</keyword>
<comment type="function">
    <text evidence="1">Seems to be required for maximal rate of protein biosynthesis. Enhances ribosome dissociation into subunits and stabilizes the binding of the initiator Met-tRNA(I) to 40 S ribosomal subunits.</text>
</comment>
<comment type="similarity">
    <text evidence="1">Belongs to the eIF-1A family.</text>
</comment>
<dbReference type="EMBL" id="CP000609">
    <property type="protein sequence ID" value="ABO35309.1"/>
    <property type="molecule type" value="Genomic_DNA"/>
</dbReference>
<dbReference type="RefSeq" id="WP_011868762.1">
    <property type="nucleotide sequence ID" value="NC_009135.1"/>
</dbReference>
<dbReference type="SMR" id="A4FYM5"/>
<dbReference type="STRING" id="402880.MmarC5_1003"/>
<dbReference type="GeneID" id="4928163"/>
<dbReference type="KEGG" id="mmq:MmarC5_1003"/>
<dbReference type="eggNOG" id="arCOG01179">
    <property type="taxonomic scope" value="Archaea"/>
</dbReference>
<dbReference type="HOGENOM" id="CLU_109098_1_2_2"/>
<dbReference type="OrthoDB" id="2586at2157"/>
<dbReference type="Proteomes" id="UP000000253">
    <property type="component" value="Chromosome"/>
</dbReference>
<dbReference type="GO" id="GO:0003723">
    <property type="term" value="F:RNA binding"/>
    <property type="evidence" value="ECO:0007669"/>
    <property type="project" value="InterPro"/>
</dbReference>
<dbReference type="GO" id="GO:0003743">
    <property type="term" value="F:translation initiation factor activity"/>
    <property type="evidence" value="ECO:0007669"/>
    <property type="project" value="UniProtKB-UniRule"/>
</dbReference>
<dbReference type="CDD" id="cd05793">
    <property type="entry name" value="S1_IF1A"/>
    <property type="match status" value="1"/>
</dbReference>
<dbReference type="Gene3D" id="2.40.50.140">
    <property type="entry name" value="Nucleic acid-binding proteins"/>
    <property type="match status" value="1"/>
</dbReference>
<dbReference type="HAMAP" id="MF_00216">
    <property type="entry name" value="aIF_1A"/>
    <property type="match status" value="1"/>
</dbReference>
<dbReference type="InterPro" id="IPR012340">
    <property type="entry name" value="NA-bd_OB-fold"/>
</dbReference>
<dbReference type="InterPro" id="IPR006196">
    <property type="entry name" value="RNA-binding_domain_S1_IF1"/>
</dbReference>
<dbReference type="InterPro" id="IPR001253">
    <property type="entry name" value="TIF_eIF-1A"/>
</dbReference>
<dbReference type="InterPro" id="IPR018104">
    <property type="entry name" value="TIF_eIF-1A_CS"/>
</dbReference>
<dbReference type="NCBIfam" id="TIGR00523">
    <property type="entry name" value="eIF-1A"/>
    <property type="match status" value="1"/>
</dbReference>
<dbReference type="NCBIfam" id="NF003084">
    <property type="entry name" value="PRK04012.1-3"/>
    <property type="match status" value="1"/>
</dbReference>
<dbReference type="NCBIfam" id="NF003085">
    <property type="entry name" value="PRK04012.1-5"/>
    <property type="match status" value="1"/>
</dbReference>
<dbReference type="PANTHER" id="PTHR21668">
    <property type="entry name" value="EIF-1A"/>
    <property type="match status" value="1"/>
</dbReference>
<dbReference type="Pfam" id="PF01176">
    <property type="entry name" value="eIF-1a"/>
    <property type="match status" value="1"/>
</dbReference>
<dbReference type="SMART" id="SM00652">
    <property type="entry name" value="eIF1a"/>
    <property type="match status" value="1"/>
</dbReference>
<dbReference type="SUPFAM" id="SSF50249">
    <property type="entry name" value="Nucleic acid-binding proteins"/>
    <property type="match status" value="1"/>
</dbReference>
<dbReference type="PROSITE" id="PS01262">
    <property type="entry name" value="IF1A"/>
    <property type="match status" value="1"/>
</dbReference>
<dbReference type="PROSITE" id="PS50832">
    <property type="entry name" value="S1_IF1_TYPE"/>
    <property type="match status" value="1"/>
</dbReference>
<name>IF1A_METM5</name>
<proteinExistence type="inferred from homology"/>
<gene>
    <name type="primary">eIF1A</name>
    <name type="ordered locus">MmarC5_1003</name>
</gene>
<sequence length="103" mass="12242">MRGQQAPQQPTRVRTPRENENEVLGVIEQMLGASRVRVRCMDGKLRMGRIPGKLKRKIWVREDDVVIVTPWEVQSDEKCDVIWRYTKGQVDWLNRKGYLEFMR</sequence>
<organism>
    <name type="scientific">Methanococcus maripaludis (strain C5 / ATCC BAA-1333)</name>
    <dbReference type="NCBI Taxonomy" id="402880"/>
    <lineage>
        <taxon>Archaea</taxon>
        <taxon>Methanobacteriati</taxon>
        <taxon>Methanobacteriota</taxon>
        <taxon>Methanomada group</taxon>
        <taxon>Methanococci</taxon>
        <taxon>Methanococcales</taxon>
        <taxon>Methanococcaceae</taxon>
        <taxon>Methanococcus</taxon>
    </lineage>
</organism>
<feature type="chain" id="PRO_1000043280" description="Translation initiation factor 1A">
    <location>
        <begin position="1"/>
        <end position="103"/>
    </location>
</feature>
<feature type="domain" description="S1-like" evidence="1">
    <location>
        <begin position="11"/>
        <end position="86"/>
    </location>
</feature>
<evidence type="ECO:0000255" key="1">
    <source>
        <dbReference type="HAMAP-Rule" id="MF_00216"/>
    </source>
</evidence>
<protein>
    <recommendedName>
        <fullName evidence="1">Translation initiation factor 1A</fullName>
        <shortName evidence="1">aIF-1A</shortName>
    </recommendedName>
</protein>